<sequence length="434" mass="49056">MRFPRIIISSDRSNSGKTLVTAGLIKVLSKRYKVRGYKVGPDFIDPMYHKIASGHPVINLDLWLMGESGVYSSLAKYGKHFDLGIIEGVMGLYDGLYEDYSTYKLSELTHTPLILVINCSNLSSTVGAIVKGLREYRNANVRGVIFNYIASEKHLDYCKKSIPENVEVLGYLPIDKSLSVPSRHLGLYTTEDFKNAKDVINATANLIEMNVDVDKIVEIAEEANELQESNEIEERNVVGKAYVAYDSAFSFYYDENIDILKKRYDVEFFSPLNNDAPADQPSFIYIGGGYPELHLEELENSTKTKDWIKRNVEKGVKLLAECGGFMFLSNEIINEKSYRMIGLYDIQIKAKDKLTIGYTELETEKDNLLSSKGESIRGHEFHVSKAVSVGDVNFAFKNKHGKGIWNGKDGVYVENSLGSYSHFHFSRTRRLLSF</sequence>
<gene>
    <name evidence="1" type="primary">cbiA</name>
    <name type="ordered locus">Saci_0825</name>
</gene>
<name>CBIA_SULAC</name>
<comment type="function">
    <text evidence="1">Catalyzes the ATP-dependent amidation of the two carboxylate groups at positions a and c of cobyrinate, using either L-glutamine or ammonia as the nitrogen source.</text>
</comment>
<comment type="catalytic activity">
    <reaction evidence="1">
        <text>cob(II)yrinate + 2 L-glutamine + 2 ATP + 2 H2O = cob(II)yrinate a,c diamide + 2 L-glutamate + 2 ADP + 2 phosphate + 2 H(+)</text>
        <dbReference type="Rhea" id="RHEA:26289"/>
        <dbReference type="ChEBI" id="CHEBI:15377"/>
        <dbReference type="ChEBI" id="CHEBI:15378"/>
        <dbReference type="ChEBI" id="CHEBI:29985"/>
        <dbReference type="ChEBI" id="CHEBI:30616"/>
        <dbReference type="ChEBI" id="CHEBI:43474"/>
        <dbReference type="ChEBI" id="CHEBI:58359"/>
        <dbReference type="ChEBI" id="CHEBI:58537"/>
        <dbReference type="ChEBI" id="CHEBI:58894"/>
        <dbReference type="ChEBI" id="CHEBI:456216"/>
        <dbReference type="EC" id="6.3.5.11"/>
    </reaction>
</comment>
<comment type="cofactor">
    <cofactor evidence="1">
        <name>Mg(2+)</name>
        <dbReference type="ChEBI" id="CHEBI:18420"/>
    </cofactor>
</comment>
<comment type="pathway">
    <text evidence="1">Cofactor biosynthesis; adenosylcobalamin biosynthesis; cob(II)yrinate a,c-diamide from sirohydrochlorin (anaerobic route): step 10/10.</text>
</comment>
<comment type="domain">
    <text evidence="1">Comprises of two domains. The C-terminal domain contains the binding site for glutamine and catalyzes the hydrolysis of this substrate to glutamate and ammonia. The N-terminal domain is anticipated to bind ATP and cobyrinate and catalyzes the ultimate synthesis of the diamide product. The ammonia produced via the glutaminase domain is probably translocated to the adjacent domain via a molecular tunnel, where it reacts with an activated intermediate.</text>
</comment>
<comment type="miscellaneous">
    <text evidence="1">The a and c carboxylates of cobyrinate are activated for nucleophilic attack via formation of a phosphorylated intermediate by ATP. CbiA catalyzes first the amidation of the c-carboxylate, and then that of the a-carboxylate.</text>
</comment>
<comment type="similarity">
    <text evidence="1">Belongs to the CobB/CbiA family.</text>
</comment>
<organism>
    <name type="scientific">Sulfolobus acidocaldarius (strain ATCC 33909 / DSM 639 / JCM 8929 / NBRC 15157 / NCIMB 11770)</name>
    <dbReference type="NCBI Taxonomy" id="330779"/>
    <lineage>
        <taxon>Archaea</taxon>
        <taxon>Thermoproteota</taxon>
        <taxon>Thermoprotei</taxon>
        <taxon>Sulfolobales</taxon>
        <taxon>Sulfolobaceae</taxon>
        <taxon>Sulfolobus</taxon>
    </lineage>
</organism>
<keyword id="KW-0067">ATP-binding</keyword>
<keyword id="KW-0169">Cobalamin biosynthesis</keyword>
<keyword id="KW-0315">Glutamine amidotransferase</keyword>
<keyword id="KW-0436">Ligase</keyword>
<keyword id="KW-0460">Magnesium</keyword>
<keyword id="KW-0547">Nucleotide-binding</keyword>
<keyword id="KW-1185">Reference proteome</keyword>
<reference key="1">
    <citation type="journal article" date="2005" name="J. Bacteriol.">
        <title>The genome of Sulfolobus acidocaldarius, a model organism of the Crenarchaeota.</title>
        <authorList>
            <person name="Chen L."/>
            <person name="Bruegger K."/>
            <person name="Skovgaard M."/>
            <person name="Redder P."/>
            <person name="She Q."/>
            <person name="Torarinsson E."/>
            <person name="Greve B."/>
            <person name="Awayez M."/>
            <person name="Zibat A."/>
            <person name="Klenk H.-P."/>
            <person name="Garrett R.A."/>
        </authorList>
    </citation>
    <scope>NUCLEOTIDE SEQUENCE [LARGE SCALE GENOMIC DNA]</scope>
    <source>
        <strain>ATCC 33909 / DSM 639 / JCM 8929 / NBRC 15157 / NCIMB 11770</strain>
    </source>
</reference>
<feature type="chain" id="PRO_0000141279" description="Cobyrinate a,c-diamide synthase">
    <location>
        <begin position="1"/>
        <end position="434"/>
    </location>
</feature>
<feature type="domain" description="GATase cobBQ-type" evidence="1">
    <location>
        <begin position="240"/>
        <end position="430"/>
    </location>
</feature>
<feature type="active site" description="Nucleophile" evidence="1">
    <location>
        <position position="322"/>
    </location>
</feature>
<feature type="site" description="Increases nucleophilicity of active site Cys" evidence="1">
    <location>
        <position position="422"/>
    </location>
</feature>
<proteinExistence type="inferred from homology"/>
<evidence type="ECO:0000255" key="1">
    <source>
        <dbReference type="HAMAP-Rule" id="MF_00027"/>
    </source>
</evidence>
<dbReference type="EC" id="6.3.5.11" evidence="1"/>
<dbReference type="EMBL" id="CP000077">
    <property type="protein sequence ID" value="AAY80193.1"/>
    <property type="molecule type" value="Genomic_DNA"/>
</dbReference>
<dbReference type="RefSeq" id="WP_011277694.1">
    <property type="nucleotide sequence ID" value="NC_007181.1"/>
</dbReference>
<dbReference type="SMR" id="Q4JAI7"/>
<dbReference type="STRING" id="330779.Saci_0825"/>
<dbReference type="GeneID" id="14551338"/>
<dbReference type="KEGG" id="sai:Saci_0825"/>
<dbReference type="PATRIC" id="fig|330779.12.peg.789"/>
<dbReference type="eggNOG" id="arCOG00106">
    <property type="taxonomic scope" value="Archaea"/>
</dbReference>
<dbReference type="HOGENOM" id="CLU_022752_2_1_2"/>
<dbReference type="UniPathway" id="UPA00148">
    <property type="reaction ID" value="UER00231"/>
</dbReference>
<dbReference type="Proteomes" id="UP000001018">
    <property type="component" value="Chromosome"/>
</dbReference>
<dbReference type="GO" id="GO:0005524">
    <property type="term" value="F:ATP binding"/>
    <property type="evidence" value="ECO:0007669"/>
    <property type="project" value="UniProtKB-UniRule"/>
</dbReference>
<dbReference type="GO" id="GO:0042242">
    <property type="term" value="F:cobyrinic acid a,c-diamide synthase activity"/>
    <property type="evidence" value="ECO:0007669"/>
    <property type="project" value="UniProtKB-UniRule"/>
</dbReference>
<dbReference type="GO" id="GO:0009236">
    <property type="term" value="P:cobalamin biosynthetic process"/>
    <property type="evidence" value="ECO:0007669"/>
    <property type="project" value="UniProtKB-UniRule"/>
</dbReference>
<dbReference type="Gene3D" id="3.40.50.880">
    <property type="match status" value="1"/>
</dbReference>
<dbReference type="Gene3D" id="3.40.50.300">
    <property type="entry name" value="P-loop containing nucleotide triphosphate hydrolases"/>
    <property type="match status" value="1"/>
</dbReference>
<dbReference type="HAMAP" id="MF_00027">
    <property type="entry name" value="CobB_CbiA"/>
    <property type="match status" value="1"/>
</dbReference>
<dbReference type="InterPro" id="IPR004484">
    <property type="entry name" value="CbiA/CobB_synth"/>
</dbReference>
<dbReference type="InterPro" id="IPR029062">
    <property type="entry name" value="Class_I_gatase-like"/>
</dbReference>
<dbReference type="InterPro" id="IPR002586">
    <property type="entry name" value="CobQ/CobB/MinD/ParA_Nub-bd_dom"/>
</dbReference>
<dbReference type="InterPro" id="IPR011698">
    <property type="entry name" value="GATase_3"/>
</dbReference>
<dbReference type="InterPro" id="IPR027417">
    <property type="entry name" value="P-loop_NTPase"/>
</dbReference>
<dbReference type="NCBIfam" id="TIGR00379">
    <property type="entry name" value="cobB"/>
    <property type="match status" value="1"/>
</dbReference>
<dbReference type="NCBIfam" id="NF002204">
    <property type="entry name" value="PRK01077.1"/>
    <property type="match status" value="1"/>
</dbReference>
<dbReference type="PANTHER" id="PTHR43873">
    <property type="entry name" value="COBYRINATE A,C-DIAMIDE SYNTHASE"/>
    <property type="match status" value="1"/>
</dbReference>
<dbReference type="PANTHER" id="PTHR43873:SF1">
    <property type="entry name" value="COBYRINATE A,C-DIAMIDE SYNTHASE"/>
    <property type="match status" value="1"/>
</dbReference>
<dbReference type="Pfam" id="PF01656">
    <property type="entry name" value="CbiA"/>
    <property type="match status" value="1"/>
</dbReference>
<dbReference type="Pfam" id="PF07685">
    <property type="entry name" value="GATase_3"/>
    <property type="match status" value="1"/>
</dbReference>
<dbReference type="SUPFAM" id="SSF52317">
    <property type="entry name" value="Class I glutamine amidotransferase-like"/>
    <property type="match status" value="1"/>
</dbReference>
<dbReference type="SUPFAM" id="SSF52540">
    <property type="entry name" value="P-loop containing nucleoside triphosphate hydrolases"/>
    <property type="match status" value="1"/>
</dbReference>
<dbReference type="PROSITE" id="PS51274">
    <property type="entry name" value="GATASE_COBBQ"/>
    <property type="match status" value="1"/>
</dbReference>
<accession>Q4JAI7</accession>
<protein>
    <recommendedName>
        <fullName evidence="1">Cobyrinate a,c-diamide synthase</fullName>
        <ecNumber evidence="1">6.3.5.11</ecNumber>
    </recommendedName>
    <alternativeName>
        <fullName evidence="1">Cobyrinic acid a,c-diamide synthetase</fullName>
    </alternativeName>
</protein>